<reference key="1">
    <citation type="journal article" date="2003" name="Nucleic Acids Res.">
        <title>Genome sequence of Chlamydophila caviae (Chlamydia psittaci GPIC): examining the role of niche-specific genes in the evolution of the Chlamydiaceae.</title>
        <authorList>
            <person name="Read T.D."/>
            <person name="Myers G.S.A."/>
            <person name="Brunham R.C."/>
            <person name="Nelson W.C."/>
            <person name="Paulsen I.T."/>
            <person name="Heidelberg J.F."/>
            <person name="Holtzapple E.K."/>
            <person name="Khouri H.M."/>
            <person name="Federova N.B."/>
            <person name="Carty H.A."/>
            <person name="Umayam L.A."/>
            <person name="Haft D.H."/>
            <person name="Peterson J.D."/>
            <person name="Beanan M.J."/>
            <person name="White O."/>
            <person name="Salzberg S.L."/>
            <person name="Hsia R.-C."/>
            <person name="McClarty G."/>
            <person name="Rank R.G."/>
            <person name="Bavoil P.M."/>
            <person name="Fraser C.M."/>
        </authorList>
    </citation>
    <scope>NUCLEOTIDE SEQUENCE [LARGE SCALE GENOMIC DNA]</scope>
    <source>
        <strain>ATCC VR-813 / DSM 19441 / 03DC25 / GPIC</strain>
    </source>
</reference>
<accession>Q821V1</accession>
<dbReference type="EMBL" id="AE015925">
    <property type="protein sequence ID" value="AAP05575.1"/>
    <property type="molecule type" value="Genomic_DNA"/>
</dbReference>
<dbReference type="RefSeq" id="WP_011006789.1">
    <property type="nucleotide sequence ID" value="NC_003361.3"/>
</dbReference>
<dbReference type="SMR" id="Q821V1"/>
<dbReference type="STRING" id="227941.CCA_00834"/>
<dbReference type="GeneID" id="81477879"/>
<dbReference type="KEGG" id="cca:CCA_00834"/>
<dbReference type="eggNOG" id="COG0257">
    <property type="taxonomic scope" value="Bacteria"/>
</dbReference>
<dbReference type="HOGENOM" id="CLU_135723_3_3_0"/>
<dbReference type="OrthoDB" id="9801558at2"/>
<dbReference type="Proteomes" id="UP000002193">
    <property type="component" value="Chromosome"/>
</dbReference>
<dbReference type="GO" id="GO:1990904">
    <property type="term" value="C:ribonucleoprotein complex"/>
    <property type="evidence" value="ECO:0007669"/>
    <property type="project" value="UniProtKB-KW"/>
</dbReference>
<dbReference type="GO" id="GO:0005840">
    <property type="term" value="C:ribosome"/>
    <property type="evidence" value="ECO:0007669"/>
    <property type="project" value="UniProtKB-KW"/>
</dbReference>
<dbReference type="GO" id="GO:0003735">
    <property type="term" value="F:structural constituent of ribosome"/>
    <property type="evidence" value="ECO:0007669"/>
    <property type="project" value="InterPro"/>
</dbReference>
<dbReference type="GO" id="GO:0006412">
    <property type="term" value="P:translation"/>
    <property type="evidence" value="ECO:0007669"/>
    <property type="project" value="UniProtKB-UniRule"/>
</dbReference>
<dbReference type="HAMAP" id="MF_00251">
    <property type="entry name" value="Ribosomal_bL36"/>
    <property type="match status" value="1"/>
</dbReference>
<dbReference type="InterPro" id="IPR000473">
    <property type="entry name" value="Ribosomal_bL36"/>
</dbReference>
<dbReference type="InterPro" id="IPR035977">
    <property type="entry name" value="Ribosomal_bL36_sp"/>
</dbReference>
<dbReference type="NCBIfam" id="TIGR01022">
    <property type="entry name" value="rpmJ_bact"/>
    <property type="match status" value="1"/>
</dbReference>
<dbReference type="Pfam" id="PF00444">
    <property type="entry name" value="Ribosomal_L36"/>
    <property type="match status" value="1"/>
</dbReference>
<dbReference type="SUPFAM" id="SSF57840">
    <property type="entry name" value="Ribosomal protein L36"/>
    <property type="match status" value="1"/>
</dbReference>
<dbReference type="PROSITE" id="PS00828">
    <property type="entry name" value="RIBOSOMAL_L36"/>
    <property type="match status" value="1"/>
</dbReference>
<name>RL36_CHLCV</name>
<evidence type="ECO:0000255" key="1">
    <source>
        <dbReference type="HAMAP-Rule" id="MF_00251"/>
    </source>
</evidence>
<evidence type="ECO:0000256" key="2">
    <source>
        <dbReference type="SAM" id="MobiDB-lite"/>
    </source>
</evidence>
<evidence type="ECO:0000305" key="3"/>
<protein>
    <recommendedName>
        <fullName evidence="1">Large ribosomal subunit protein bL36</fullName>
    </recommendedName>
    <alternativeName>
        <fullName evidence="3">50S ribosomal protein L36</fullName>
    </alternativeName>
</protein>
<proteinExistence type="inferred from homology"/>
<organism>
    <name type="scientific">Chlamydia caviae (strain ATCC VR-813 / DSM 19441 / 03DC25 / GPIC)</name>
    <name type="common">Chlamydophila caviae</name>
    <dbReference type="NCBI Taxonomy" id="227941"/>
    <lineage>
        <taxon>Bacteria</taxon>
        <taxon>Pseudomonadati</taxon>
        <taxon>Chlamydiota</taxon>
        <taxon>Chlamydiia</taxon>
        <taxon>Chlamydiales</taxon>
        <taxon>Chlamydiaceae</taxon>
        <taxon>Chlamydia/Chlamydophila group</taxon>
        <taxon>Chlamydia</taxon>
    </lineage>
</organism>
<feature type="chain" id="PRO_0000126169" description="Large ribosomal subunit protein bL36">
    <location>
        <begin position="1"/>
        <end position="45"/>
    </location>
</feature>
<feature type="region of interest" description="Disordered" evidence="2">
    <location>
        <begin position="1"/>
        <end position="45"/>
    </location>
</feature>
<sequence length="45" mass="5135">MKVSSSIKADPSKGDKLVRRKGRLYVINKKDPNRKQRQAGPARKK</sequence>
<comment type="similarity">
    <text evidence="1">Belongs to the bacterial ribosomal protein bL36 family.</text>
</comment>
<gene>
    <name evidence="1" type="primary">rpmJ</name>
    <name type="ordered locus">CCA_00834</name>
</gene>
<keyword id="KW-0687">Ribonucleoprotein</keyword>
<keyword id="KW-0689">Ribosomal protein</keyword>